<dbReference type="EC" id="6.1.1.7" evidence="1"/>
<dbReference type="EMBL" id="CP000686">
    <property type="protein sequence ID" value="ABQ91584.1"/>
    <property type="status" value="ALT_INIT"/>
    <property type="molecule type" value="Genomic_DNA"/>
</dbReference>
<dbReference type="RefSeq" id="WP_041333950.1">
    <property type="nucleotide sequence ID" value="NC_009523.1"/>
</dbReference>
<dbReference type="SMR" id="A5UY81"/>
<dbReference type="STRING" id="357808.RoseRS_3223"/>
<dbReference type="KEGG" id="rrs:RoseRS_3223"/>
<dbReference type="eggNOG" id="COG0013">
    <property type="taxonomic scope" value="Bacteria"/>
</dbReference>
<dbReference type="HOGENOM" id="CLU_004485_1_1_0"/>
<dbReference type="OrthoDB" id="9803884at2"/>
<dbReference type="Proteomes" id="UP000006554">
    <property type="component" value="Chromosome"/>
</dbReference>
<dbReference type="GO" id="GO:0005829">
    <property type="term" value="C:cytosol"/>
    <property type="evidence" value="ECO:0007669"/>
    <property type="project" value="TreeGrafter"/>
</dbReference>
<dbReference type="GO" id="GO:0004813">
    <property type="term" value="F:alanine-tRNA ligase activity"/>
    <property type="evidence" value="ECO:0007669"/>
    <property type="project" value="UniProtKB-UniRule"/>
</dbReference>
<dbReference type="GO" id="GO:0002161">
    <property type="term" value="F:aminoacyl-tRNA deacylase activity"/>
    <property type="evidence" value="ECO:0007669"/>
    <property type="project" value="TreeGrafter"/>
</dbReference>
<dbReference type="GO" id="GO:0005524">
    <property type="term" value="F:ATP binding"/>
    <property type="evidence" value="ECO:0007669"/>
    <property type="project" value="UniProtKB-UniRule"/>
</dbReference>
<dbReference type="GO" id="GO:0000049">
    <property type="term" value="F:tRNA binding"/>
    <property type="evidence" value="ECO:0007669"/>
    <property type="project" value="UniProtKB-KW"/>
</dbReference>
<dbReference type="GO" id="GO:0008270">
    <property type="term" value="F:zinc ion binding"/>
    <property type="evidence" value="ECO:0007669"/>
    <property type="project" value="UniProtKB-UniRule"/>
</dbReference>
<dbReference type="GO" id="GO:0006419">
    <property type="term" value="P:alanyl-tRNA aminoacylation"/>
    <property type="evidence" value="ECO:0007669"/>
    <property type="project" value="UniProtKB-UniRule"/>
</dbReference>
<dbReference type="CDD" id="cd00673">
    <property type="entry name" value="AlaRS_core"/>
    <property type="match status" value="1"/>
</dbReference>
<dbReference type="FunFam" id="3.10.310.40:FF:000001">
    <property type="entry name" value="Alanine--tRNA ligase"/>
    <property type="match status" value="1"/>
</dbReference>
<dbReference type="FunFam" id="3.30.930.10:FF:000004">
    <property type="entry name" value="Alanine--tRNA ligase"/>
    <property type="match status" value="1"/>
</dbReference>
<dbReference type="FunFam" id="3.30.980.10:FF:000004">
    <property type="entry name" value="Alanine--tRNA ligase, cytoplasmic"/>
    <property type="match status" value="1"/>
</dbReference>
<dbReference type="Gene3D" id="2.40.30.130">
    <property type="match status" value="1"/>
</dbReference>
<dbReference type="Gene3D" id="3.10.310.40">
    <property type="match status" value="1"/>
</dbReference>
<dbReference type="Gene3D" id="3.30.54.20">
    <property type="match status" value="1"/>
</dbReference>
<dbReference type="Gene3D" id="6.10.250.550">
    <property type="match status" value="1"/>
</dbReference>
<dbReference type="Gene3D" id="3.30.930.10">
    <property type="entry name" value="Bira Bifunctional Protein, Domain 2"/>
    <property type="match status" value="1"/>
</dbReference>
<dbReference type="Gene3D" id="3.30.980.10">
    <property type="entry name" value="Threonyl-trna Synthetase, Chain A, domain 2"/>
    <property type="match status" value="1"/>
</dbReference>
<dbReference type="HAMAP" id="MF_00036_B">
    <property type="entry name" value="Ala_tRNA_synth_B"/>
    <property type="match status" value="1"/>
</dbReference>
<dbReference type="InterPro" id="IPR045864">
    <property type="entry name" value="aa-tRNA-synth_II/BPL/LPL"/>
</dbReference>
<dbReference type="InterPro" id="IPR002318">
    <property type="entry name" value="Ala-tRNA-lgiase_IIc"/>
</dbReference>
<dbReference type="InterPro" id="IPR018162">
    <property type="entry name" value="Ala-tRNA-ligase_IIc_anticod-bd"/>
</dbReference>
<dbReference type="InterPro" id="IPR018165">
    <property type="entry name" value="Ala-tRNA-synth_IIc_core"/>
</dbReference>
<dbReference type="InterPro" id="IPR018164">
    <property type="entry name" value="Ala-tRNA-synth_IIc_N"/>
</dbReference>
<dbReference type="InterPro" id="IPR050058">
    <property type="entry name" value="Ala-tRNA_ligase"/>
</dbReference>
<dbReference type="InterPro" id="IPR023033">
    <property type="entry name" value="Ala_tRNA_ligase_euk/bac"/>
</dbReference>
<dbReference type="InterPro" id="IPR003156">
    <property type="entry name" value="DHHA1_dom"/>
</dbReference>
<dbReference type="InterPro" id="IPR018163">
    <property type="entry name" value="Thr/Ala-tRNA-synth_IIc_edit"/>
</dbReference>
<dbReference type="InterPro" id="IPR009000">
    <property type="entry name" value="Transl_B-barrel_sf"/>
</dbReference>
<dbReference type="InterPro" id="IPR012947">
    <property type="entry name" value="tRNA_SAD"/>
</dbReference>
<dbReference type="NCBIfam" id="TIGR00344">
    <property type="entry name" value="alaS"/>
    <property type="match status" value="1"/>
</dbReference>
<dbReference type="PANTHER" id="PTHR11777:SF9">
    <property type="entry name" value="ALANINE--TRNA LIGASE, CYTOPLASMIC"/>
    <property type="match status" value="1"/>
</dbReference>
<dbReference type="PANTHER" id="PTHR11777">
    <property type="entry name" value="ALANYL-TRNA SYNTHETASE"/>
    <property type="match status" value="1"/>
</dbReference>
<dbReference type="Pfam" id="PF02272">
    <property type="entry name" value="DHHA1"/>
    <property type="match status" value="1"/>
</dbReference>
<dbReference type="Pfam" id="PF01411">
    <property type="entry name" value="tRNA-synt_2c"/>
    <property type="match status" value="1"/>
</dbReference>
<dbReference type="Pfam" id="PF07973">
    <property type="entry name" value="tRNA_SAD"/>
    <property type="match status" value="1"/>
</dbReference>
<dbReference type="PRINTS" id="PR00980">
    <property type="entry name" value="TRNASYNTHALA"/>
</dbReference>
<dbReference type="SMART" id="SM00863">
    <property type="entry name" value="tRNA_SAD"/>
    <property type="match status" value="1"/>
</dbReference>
<dbReference type="SUPFAM" id="SSF55681">
    <property type="entry name" value="Class II aaRS and biotin synthetases"/>
    <property type="match status" value="1"/>
</dbReference>
<dbReference type="SUPFAM" id="SSF101353">
    <property type="entry name" value="Putative anticodon-binding domain of alanyl-tRNA synthetase (AlaRS)"/>
    <property type="match status" value="1"/>
</dbReference>
<dbReference type="SUPFAM" id="SSF55186">
    <property type="entry name" value="ThrRS/AlaRS common domain"/>
    <property type="match status" value="1"/>
</dbReference>
<dbReference type="SUPFAM" id="SSF50447">
    <property type="entry name" value="Translation proteins"/>
    <property type="match status" value="1"/>
</dbReference>
<dbReference type="PROSITE" id="PS50860">
    <property type="entry name" value="AA_TRNA_LIGASE_II_ALA"/>
    <property type="match status" value="1"/>
</dbReference>
<reference key="1">
    <citation type="submission" date="2007-04" db="EMBL/GenBank/DDBJ databases">
        <title>Complete sequence of Roseiflexus sp. RS-1.</title>
        <authorList>
            <consortium name="US DOE Joint Genome Institute"/>
            <person name="Copeland A."/>
            <person name="Lucas S."/>
            <person name="Lapidus A."/>
            <person name="Barry K."/>
            <person name="Detter J.C."/>
            <person name="Glavina del Rio T."/>
            <person name="Hammon N."/>
            <person name="Israni S."/>
            <person name="Dalin E."/>
            <person name="Tice H."/>
            <person name="Pitluck S."/>
            <person name="Chertkov O."/>
            <person name="Brettin T."/>
            <person name="Bruce D."/>
            <person name="Han C."/>
            <person name="Schmutz J."/>
            <person name="Larimer F."/>
            <person name="Land M."/>
            <person name="Hauser L."/>
            <person name="Kyrpides N."/>
            <person name="Mikhailova N."/>
            <person name="Bryant D.A."/>
            <person name="Richardson P."/>
        </authorList>
    </citation>
    <scope>NUCLEOTIDE SEQUENCE [LARGE SCALE GENOMIC DNA]</scope>
    <source>
        <strain>RS-1</strain>
    </source>
</reference>
<accession>A5UY81</accession>
<name>SYA_ROSS1</name>
<organism>
    <name type="scientific">Roseiflexus sp. (strain RS-1)</name>
    <dbReference type="NCBI Taxonomy" id="357808"/>
    <lineage>
        <taxon>Bacteria</taxon>
        <taxon>Bacillati</taxon>
        <taxon>Chloroflexota</taxon>
        <taxon>Chloroflexia</taxon>
        <taxon>Chloroflexales</taxon>
        <taxon>Roseiflexineae</taxon>
        <taxon>Roseiflexaceae</taxon>
        <taxon>Roseiflexus</taxon>
    </lineage>
</organism>
<proteinExistence type="inferred from homology"/>
<comment type="function">
    <text evidence="1">Catalyzes the attachment of alanine to tRNA(Ala) in a two-step reaction: alanine is first activated by ATP to form Ala-AMP and then transferred to the acceptor end of tRNA(Ala). Also edits incorrectly charged Ser-tRNA(Ala) and Gly-tRNA(Ala) via its editing domain.</text>
</comment>
<comment type="catalytic activity">
    <reaction evidence="1">
        <text>tRNA(Ala) + L-alanine + ATP = L-alanyl-tRNA(Ala) + AMP + diphosphate</text>
        <dbReference type="Rhea" id="RHEA:12540"/>
        <dbReference type="Rhea" id="RHEA-COMP:9657"/>
        <dbReference type="Rhea" id="RHEA-COMP:9923"/>
        <dbReference type="ChEBI" id="CHEBI:30616"/>
        <dbReference type="ChEBI" id="CHEBI:33019"/>
        <dbReference type="ChEBI" id="CHEBI:57972"/>
        <dbReference type="ChEBI" id="CHEBI:78442"/>
        <dbReference type="ChEBI" id="CHEBI:78497"/>
        <dbReference type="ChEBI" id="CHEBI:456215"/>
        <dbReference type="EC" id="6.1.1.7"/>
    </reaction>
</comment>
<comment type="cofactor">
    <cofactor evidence="1">
        <name>Zn(2+)</name>
        <dbReference type="ChEBI" id="CHEBI:29105"/>
    </cofactor>
    <text evidence="1">Binds 1 zinc ion per subunit.</text>
</comment>
<comment type="subcellular location">
    <subcellularLocation>
        <location evidence="1">Cytoplasm</location>
    </subcellularLocation>
</comment>
<comment type="domain">
    <text evidence="1">Consists of three domains; the N-terminal catalytic domain, the editing domain and the C-terminal C-Ala domain. The editing domain removes incorrectly charged amino acids, while the C-Ala domain, along with tRNA(Ala), serves as a bridge to cooperatively bring together the editing and aminoacylation centers thus stimulating deacylation of misacylated tRNAs.</text>
</comment>
<comment type="similarity">
    <text evidence="1">Belongs to the class-II aminoacyl-tRNA synthetase family.</text>
</comment>
<comment type="sequence caution" evidence="2">
    <conflict type="erroneous initiation">
        <sequence resource="EMBL-CDS" id="ABQ91584"/>
    </conflict>
</comment>
<gene>
    <name evidence="1" type="primary">alaS</name>
    <name type="ordered locus">RoseRS_3223</name>
</gene>
<feature type="chain" id="PRO_0000347768" description="Alanine--tRNA ligase">
    <location>
        <begin position="1"/>
        <end position="905"/>
    </location>
</feature>
<feature type="binding site" evidence="1">
    <location>
        <position position="569"/>
    </location>
    <ligand>
        <name>Zn(2+)</name>
        <dbReference type="ChEBI" id="CHEBI:29105"/>
    </ligand>
</feature>
<feature type="binding site" evidence="1">
    <location>
        <position position="573"/>
    </location>
    <ligand>
        <name>Zn(2+)</name>
        <dbReference type="ChEBI" id="CHEBI:29105"/>
    </ligand>
</feature>
<feature type="binding site" evidence="1">
    <location>
        <position position="693"/>
    </location>
    <ligand>
        <name>Zn(2+)</name>
        <dbReference type="ChEBI" id="CHEBI:29105"/>
    </ligand>
</feature>
<feature type="binding site" evidence="1">
    <location>
        <position position="697"/>
    </location>
    <ligand>
        <name>Zn(2+)</name>
        <dbReference type="ChEBI" id="CHEBI:29105"/>
    </ligand>
</feature>
<keyword id="KW-0030">Aminoacyl-tRNA synthetase</keyword>
<keyword id="KW-0067">ATP-binding</keyword>
<keyword id="KW-0963">Cytoplasm</keyword>
<keyword id="KW-0436">Ligase</keyword>
<keyword id="KW-0479">Metal-binding</keyword>
<keyword id="KW-0547">Nucleotide-binding</keyword>
<keyword id="KW-0648">Protein biosynthesis</keyword>
<keyword id="KW-0694">RNA-binding</keyword>
<keyword id="KW-0820">tRNA-binding</keyword>
<keyword id="KW-0862">Zinc</keyword>
<sequence length="905" mass="98634">MKKLSSAAIREQFLRFFEERGHVRVPSSSLIPGNDPTLLFTNSGMVQFKDTFLGLEQRPYTRATTVQKCLRVSGKHNDLEEVGPSPRHHTFFEMLGNFSFGDYFKSEAIPMAWELLTKVFELPVERLWFTVFEGDDEVPPDDEAAQLWVAAGADPDRVLRFGRKDNFWVMADTGPCGPCSEITIYIGDDLRAMSAQGVNSDDPNYVEIWNNVFMQFERSTMQPLHRPSVDTGMGLERMAMVMQGVHSTYETDLFIPLIERQLALLGADESTYRARVAPYRAVADHSRAVAFLIADGVLPGNTGRSYVLRRILRRAVYQGRTVGFEKPFLAEIVAAVIEQMGAVYPELRERADFILETVDLEERQFLRTLSGGMSILNSVIERVRASGSTVIPGDDAFTLKDTYGFPLDLTQKIAAEHGLTVDEAGYERRMEEQRDRGRRAAQFKRAAEAEVWAGIDLPPTRFTGYAAVSGSGVVQAIVVAGDQVAEASAGQQVQIALDSTPFYAESGGQVGDTGVLIGPRGRVRVEDVQRPVPGVIVHYGVVESGSVMLHDPVDAHVDSGRRAAIMRNHTATHLLHRALRDVLGEHAAQAGSLVAPDRLRFDFTHTRPLTPEQLHEIERRVNAWIRADTPVVWQELSYQAAIEAGAIALFGEKYGDVVRMVTIGCVNGHDAPSPAALAERELAGFPMCSRELCGGTHVGRSGEIGLFRIISESSVAAGVRRIEALTGPEAEAWVDAQIATLQAVAARVGAPQTQLVERVEALIAELKQRQRALDELTARMARSNLEGLLASVQSVGDIRFLAAQVEAPNAARLREMGDWLRDKLGSGVVVLATVFDGKAQILAMATPDLAGKRIHAGNLVKALAPIVGGSGGGRPDMAQAGGRDSAKIPQALEHVAAVIAAQAGV</sequence>
<protein>
    <recommendedName>
        <fullName evidence="1">Alanine--tRNA ligase</fullName>
        <ecNumber evidence="1">6.1.1.7</ecNumber>
    </recommendedName>
    <alternativeName>
        <fullName evidence="1">Alanyl-tRNA synthetase</fullName>
        <shortName evidence="1">AlaRS</shortName>
    </alternativeName>
</protein>
<evidence type="ECO:0000255" key="1">
    <source>
        <dbReference type="HAMAP-Rule" id="MF_00036"/>
    </source>
</evidence>
<evidence type="ECO:0000305" key="2"/>